<gene>
    <name evidence="1" type="primary">thrS</name>
    <name type="ordered locus">Pcryo_2417</name>
</gene>
<proteinExistence type="inferred from homology"/>
<feature type="chain" id="PRO_1000020479" description="Threonine--tRNA ligase">
    <location>
        <begin position="1"/>
        <end position="644"/>
    </location>
</feature>
<feature type="domain" description="TGS" evidence="2">
    <location>
        <begin position="1"/>
        <end position="61"/>
    </location>
</feature>
<feature type="region of interest" description="Catalytic" evidence="1">
    <location>
        <begin position="242"/>
        <end position="533"/>
    </location>
</feature>
<feature type="binding site" evidence="1">
    <location>
        <position position="333"/>
    </location>
    <ligand>
        <name>Zn(2+)</name>
        <dbReference type="ChEBI" id="CHEBI:29105"/>
    </ligand>
</feature>
<feature type="binding site" evidence="1">
    <location>
        <position position="384"/>
    </location>
    <ligand>
        <name>Zn(2+)</name>
        <dbReference type="ChEBI" id="CHEBI:29105"/>
    </ligand>
</feature>
<feature type="binding site" evidence="1">
    <location>
        <position position="510"/>
    </location>
    <ligand>
        <name>Zn(2+)</name>
        <dbReference type="ChEBI" id="CHEBI:29105"/>
    </ligand>
</feature>
<comment type="function">
    <text evidence="1">Catalyzes the attachment of threonine to tRNA(Thr) in a two-step reaction: L-threonine is first activated by ATP to form Thr-AMP and then transferred to the acceptor end of tRNA(Thr). Also edits incorrectly charged L-seryl-tRNA(Thr).</text>
</comment>
<comment type="catalytic activity">
    <reaction evidence="1">
        <text>tRNA(Thr) + L-threonine + ATP = L-threonyl-tRNA(Thr) + AMP + diphosphate + H(+)</text>
        <dbReference type="Rhea" id="RHEA:24624"/>
        <dbReference type="Rhea" id="RHEA-COMP:9670"/>
        <dbReference type="Rhea" id="RHEA-COMP:9704"/>
        <dbReference type="ChEBI" id="CHEBI:15378"/>
        <dbReference type="ChEBI" id="CHEBI:30616"/>
        <dbReference type="ChEBI" id="CHEBI:33019"/>
        <dbReference type="ChEBI" id="CHEBI:57926"/>
        <dbReference type="ChEBI" id="CHEBI:78442"/>
        <dbReference type="ChEBI" id="CHEBI:78534"/>
        <dbReference type="ChEBI" id="CHEBI:456215"/>
        <dbReference type="EC" id="6.1.1.3"/>
    </reaction>
</comment>
<comment type="cofactor">
    <cofactor evidence="1">
        <name>Zn(2+)</name>
        <dbReference type="ChEBI" id="CHEBI:29105"/>
    </cofactor>
    <text evidence="1">Binds 1 zinc ion per subunit.</text>
</comment>
<comment type="subunit">
    <text evidence="1">Homodimer.</text>
</comment>
<comment type="subcellular location">
    <subcellularLocation>
        <location evidence="1">Cytoplasm</location>
    </subcellularLocation>
</comment>
<comment type="similarity">
    <text evidence="1">Belongs to the class-II aminoacyl-tRNA synthetase family.</text>
</comment>
<name>SYT_PSYCK</name>
<keyword id="KW-0030">Aminoacyl-tRNA synthetase</keyword>
<keyword id="KW-0067">ATP-binding</keyword>
<keyword id="KW-0963">Cytoplasm</keyword>
<keyword id="KW-0436">Ligase</keyword>
<keyword id="KW-0479">Metal-binding</keyword>
<keyword id="KW-0547">Nucleotide-binding</keyword>
<keyword id="KW-0648">Protein biosynthesis</keyword>
<keyword id="KW-0694">RNA-binding</keyword>
<keyword id="KW-0820">tRNA-binding</keyword>
<keyword id="KW-0862">Zinc</keyword>
<reference key="1">
    <citation type="submission" date="2006-03" db="EMBL/GenBank/DDBJ databases">
        <title>Complete sequence of chromosome of Psychrobacter cryohalolentis K5.</title>
        <authorList>
            <consortium name="US DOE Joint Genome Institute"/>
            <person name="Copeland A."/>
            <person name="Lucas S."/>
            <person name="Lapidus A."/>
            <person name="Barry K."/>
            <person name="Detter J.C."/>
            <person name="Glavina T."/>
            <person name="Hammon N."/>
            <person name="Israni S."/>
            <person name="Dalin E."/>
            <person name="Tice H."/>
            <person name="Pitluck S."/>
            <person name="Brettin T."/>
            <person name="Bruce D."/>
            <person name="Han C."/>
            <person name="Tapia R."/>
            <person name="Sims D.R."/>
            <person name="Gilna P."/>
            <person name="Schmutz J."/>
            <person name="Larimer F."/>
            <person name="Land M."/>
            <person name="Hauser L."/>
            <person name="Kyrpides N."/>
            <person name="Kim E."/>
            <person name="Richardson P."/>
        </authorList>
    </citation>
    <scope>NUCLEOTIDE SEQUENCE [LARGE SCALE GENOMIC DNA]</scope>
    <source>
        <strain>ATCC BAA-1226 / DSM 17306 / VKM B-2378 / K5</strain>
    </source>
</reference>
<dbReference type="EC" id="6.1.1.3" evidence="1"/>
<dbReference type="EMBL" id="CP000323">
    <property type="protein sequence ID" value="ABE76194.1"/>
    <property type="molecule type" value="Genomic_DNA"/>
</dbReference>
<dbReference type="RefSeq" id="WP_011514719.1">
    <property type="nucleotide sequence ID" value="NC_007969.1"/>
</dbReference>
<dbReference type="SMR" id="Q1Q809"/>
<dbReference type="STRING" id="335284.Pcryo_2417"/>
<dbReference type="KEGG" id="pcr:Pcryo_2417"/>
<dbReference type="eggNOG" id="COG0441">
    <property type="taxonomic scope" value="Bacteria"/>
</dbReference>
<dbReference type="HOGENOM" id="CLU_008554_0_1_6"/>
<dbReference type="Proteomes" id="UP000002425">
    <property type="component" value="Chromosome"/>
</dbReference>
<dbReference type="GO" id="GO:0005829">
    <property type="term" value="C:cytosol"/>
    <property type="evidence" value="ECO:0007669"/>
    <property type="project" value="TreeGrafter"/>
</dbReference>
<dbReference type="GO" id="GO:0005524">
    <property type="term" value="F:ATP binding"/>
    <property type="evidence" value="ECO:0007669"/>
    <property type="project" value="UniProtKB-UniRule"/>
</dbReference>
<dbReference type="GO" id="GO:0046872">
    <property type="term" value="F:metal ion binding"/>
    <property type="evidence" value="ECO:0007669"/>
    <property type="project" value="UniProtKB-KW"/>
</dbReference>
<dbReference type="GO" id="GO:0004829">
    <property type="term" value="F:threonine-tRNA ligase activity"/>
    <property type="evidence" value="ECO:0007669"/>
    <property type="project" value="UniProtKB-UniRule"/>
</dbReference>
<dbReference type="GO" id="GO:0000049">
    <property type="term" value="F:tRNA binding"/>
    <property type="evidence" value="ECO:0007669"/>
    <property type="project" value="UniProtKB-KW"/>
</dbReference>
<dbReference type="GO" id="GO:0006435">
    <property type="term" value="P:threonyl-tRNA aminoacylation"/>
    <property type="evidence" value="ECO:0007669"/>
    <property type="project" value="UniProtKB-UniRule"/>
</dbReference>
<dbReference type="CDD" id="cd01667">
    <property type="entry name" value="TGS_ThrRS"/>
    <property type="match status" value="1"/>
</dbReference>
<dbReference type="CDD" id="cd00860">
    <property type="entry name" value="ThrRS_anticodon"/>
    <property type="match status" value="1"/>
</dbReference>
<dbReference type="CDD" id="cd00771">
    <property type="entry name" value="ThrRS_core"/>
    <property type="match status" value="1"/>
</dbReference>
<dbReference type="FunFam" id="3.10.20.30:FF:000005">
    <property type="entry name" value="Threonine--tRNA ligase"/>
    <property type="match status" value="1"/>
</dbReference>
<dbReference type="FunFam" id="3.30.54.20:FF:000002">
    <property type="entry name" value="Threonine--tRNA ligase"/>
    <property type="match status" value="1"/>
</dbReference>
<dbReference type="FunFam" id="3.30.930.10:FF:000002">
    <property type="entry name" value="Threonine--tRNA ligase"/>
    <property type="match status" value="1"/>
</dbReference>
<dbReference type="FunFam" id="3.40.50.800:FF:000001">
    <property type="entry name" value="Threonine--tRNA ligase"/>
    <property type="match status" value="1"/>
</dbReference>
<dbReference type="FunFam" id="3.30.980.10:FF:000005">
    <property type="entry name" value="Threonyl-tRNA synthetase, mitochondrial"/>
    <property type="match status" value="1"/>
</dbReference>
<dbReference type="Gene3D" id="3.10.20.30">
    <property type="match status" value="1"/>
</dbReference>
<dbReference type="Gene3D" id="3.30.54.20">
    <property type="match status" value="1"/>
</dbReference>
<dbReference type="Gene3D" id="3.40.50.800">
    <property type="entry name" value="Anticodon-binding domain"/>
    <property type="match status" value="1"/>
</dbReference>
<dbReference type="Gene3D" id="3.30.930.10">
    <property type="entry name" value="Bira Bifunctional Protein, Domain 2"/>
    <property type="match status" value="1"/>
</dbReference>
<dbReference type="Gene3D" id="3.30.980.10">
    <property type="entry name" value="Threonyl-trna Synthetase, Chain A, domain 2"/>
    <property type="match status" value="1"/>
</dbReference>
<dbReference type="HAMAP" id="MF_00184">
    <property type="entry name" value="Thr_tRNA_synth"/>
    <property type="match status" value="1"/>
</dbReference>
<dbReference type="InterPro" id="IPR002314">
    <property type="entry name" value="aa-tRNA-synt_IIb"/>
</dbReference>
<dbReference type="InterPro" id="IPR006195">
    <property type="entry name" value="aa-tRNA-synth_II"/>
</dbReference>
<dbReference type="InterPro" id="IPR045864">
    <property type="entry name" value="aa-tRNA-synth_II/BPL/LPL"/>
</dbReference>
<dbReference type="InterPro" id="IPR004154">
    <property type="entry name" value="Anticodon-bd"/>
</dbReference>
<dbReference type="InterPro" id="IPR036621">
    <property type="entry name" value="Anticodon-bd_dom_sf"/>
</dbReference>
<dbReference type="InterPro" id="IPR012675">
    <property type="entry name" value="Beta-grasp_dom_sf"/>
</dbReference>
<dbReference type="InterPro" id="IPR004095">
    <property type="entry name" value="TGS"/>
</dbReference>
<dbReference type="InterPro" id="IPR012676">
    <property type="entry name" value="TGS-like"/>
</dbReference>
<dbReference type="InterPro" id="IPR002320">
    <property type="entry name" value="Thr-tRNA-ligase_IIa"/>
</dbReference>
<dbReference type="InterPro" id="IPR018163">
    <property type="entry name" value="Thr/Ala-tRNA-synth_IIc_edit"/>
</dbReference>
<dbReference type="InterPro" id="IPR047246">
    <property type="entry name" value="ThrRS_anticodon"/>
</dbReference>
<dbReference type="InterPro" id="IPR033728">
    <property type="entry name" value="ThrRS_core"/>
</dbReference>
<dbReference type="InterPro" id="IPR012947">
    <property type="entry name" value="tRNA_SAD"/>
</dbReference>
<dbReference type="NCBIfam" id="TIGR00418">
    <property type="entry name" value="thrS"/>
    <property type="match status" value="1"/>
</dbReference>
<dbReference type="PANTHER" id="PTHR11451:SF44">
    <property type="entry name" value="THREONINE--TRNA LIGASE, CHLOROPLASTIC_MITOCHONDRIAL 2"/>
    <property type="match status" value="1"/>
</dbReference>
<dbReference type="PANTHER" id="PTHR11451">
    <property type="entry name" value="THREONINE-TRNA LIGASE"/>
    <property type="match status" value="1"/>
</dbReference>
<dbReference type="Pfam" id="PF03129">
    <property type="entry name" value="HGTP_anticodon"/>
    <property type="match status" value="1"/>
</dbReference>
<dbReference type="Pfam" id="PF02824">
    <property type="entry name" value="TGS"/>
    <property type="match status" value="1"/>
</dbReference>
<dbReference type="Pfam" id="PF00587">
    <property type="entry name" value="tRNA-synt_2b"/>
    <property type="match status" value="1"/>
</dbReference>
<dbReference type="Pfam" id="PF07973">
    <property type="entry name" value="tRNA_SAD"/>
    <property type="match status" value="1"/>
</dbReference>
<dbReference type="PRINTS" id="PR01047">
    <property type="entry name" value="TRNASYNTHTHR"/>
</dbReference>
<dbReference type="SMART" id="SM00863">
    <property type="entry name" value="tRNA_SAD"/>
    <property type="match status" value="1"/>
</dbReference>
<dbReference type="SUPFAM" id="SSF52954">
    <property type="entry name" value="Class II aaRS ABD-related"/>
    <property type="match status" value="1"/>
</dbReference>
<dbReference type="SUPFAM" id="SSF55681">
    <property type="entry name" value="Class II aaRS and biotin synthetases"/>
    <property type="match status" value="1"/>
</dbReference>
<dbReference type="SUPFAM" id="SSF81271">
    <property type="entry name" value="TGS-like"/>
    <property type="match status" value="1"/>
</dbReference>
<dbReference type="SUPFAM" id="SSF55186">
    <property type="entry name" value="ThrRS/AlaRS common domain"/>
    <property type="match status" value="1"/>
</dbReference>
<dbReference type="PROSITE" id="PS50862">
    <property type="entry name" value="AA_TRNA_LIGASE_II"/>
    <property type="match status" value="1"/>
</dbReference>
<dbReference type="PROSITE" id="PS51880">
    <property type="entry name" value="TGS"/>
    <property type="match status" value="1"/>
</dbReference>
<protein>
    <recommendedName>
        <fullName evidence="1">Threonine--tRNA ligase</fullName>
        <ecNumber evidence="1">6.1.1.3</ecNumber>
    </recommendedName>
    <alternativeName>
        <fullName evidence="1">Threonyl-tRNA synthetase</fullName>
        <shortName evidence="1">ThrRS</shortName>
    </alternativeName>
</protein>
<organism>
    <name type="scientific">Psychrobacter cryohalolentis (strain ATCC BAA-1226 / DSM 17306 / VKM B-2378 / K5)</name>
    <dbReference type="NCBI Taxonomy" id="335284"/>
    <lineage>
        <taxon>Bacteria</taxon>
        <taxon>Pseudomonadati</taxon>
        <taxon>Pseudomonadota</taxon>
        <taxon>Gammaproteobacteria</taxon>
        <taxon>Moraxellales</taxon>
        <taxon>Moraxellaceae</taxon>
        <taxon>Psychrobacter</taxon>
    </lineage>
</organism>
<sequence length="644" mass="73376">MVAITLPDGSVKNFEGNTTVMEVAQSIGTGLAKATVAGRVDGQLVDAHDPIAHDAKVEIVTPKDDDGVDIIRHSCAHLLGHAVKQLYPDVKMVIGPVIDDGFYYDIYSETPFTPEHMAAIEKRMMELIKQDYDVIKKITPRAEVIRIFEERGEEYKLKLINDMPGEEAFGLYHHQEYVDMCRGPHVPNTRFLKVFKLTKMSGAYWRGDAKNEQLQRIYGTAWADKKDLKAYIQRIEEAEKRDHRKIGKALNLFHMQEQAPGMVFWHANGWTIYQVLEQYMRKVQHDNGYEEIKTPQIVDRSLWERSGHWGNYATNMFTTSSENRDYAVKPMNCPCHVQVFNQGLKSYRDLPLRMAEFGSCHRNEPSGSLHGLMRVRGFTQDDAHIFCTQSQIQQEVADFIKLTLAVYEDFGFDKIIMKLSTRPEKRVGSDESWDFAEKALADALDSSGLDWAYLPGEGAFYGPKIEFSLKDSLGRVWQCGTIQVDPNMPERLDAEFVNEQNEREVPIMLHRAILGSFERFIGILIENYAGWMPVWLAPQQVVVMNITDKQADACENVVNELKKAGLRAISDLRNEKIGFKIREKTLERIPYMLVLGDKEVESGSINVRTREGENLGVMSVAEFITLVEAAVAEKGRQIPKIDQE</sequence>
<evidence type="ECO:0000255" key="1">
    <source>
        <dbReference type="HAMAP-Rule" id="MF_00184"/>
    </source>
</evidence>
<evidence type="ECO:0000255" key="2">
    <source>
        <dbReference type="PROSITE-ProRule" id="PRU01228"/>
    </source>
</evidence>
<accession>Q1Q809</accession>